<proteinExistence type="inferred from homology"/>
<sequence length="333" mass="36898">MNKLITIERHFVEEQKLNPDATGELTDLLYDVAFAAKLVRREVVRAGLVDILGMAGTTNVQGEEVKKLDLFANDKIINAIGQHGRFALMGSEENEGTIIPPKNESGKYVLLFDPLDGSSNIDVNVSVGTIFSIYRLTGDDPSKADINDCLQKGSQQVAAGYVIYGSSVVMVYTTGHGVHGFTYDPTIGEFLLSHENITTPKQGKYYSINEGSRKQFNDSTVNYINYLKEEDAETGRPYSTRYIGSLVADFHRNLLTGGVFVYPATKQHRNGKLRLMYEANPLAFICEQAGGRATNGSERILDIDPSELHQRTPLYIGSEEDVIIAEEFEQGKR</sequence>
<organism>
    <name type="scientific">Chlorobium phaeobacteroides (strain BS1)</name>
    <dbReference type="NCBI Taxonomy" id="331678"/>
    <lineage>
        <taxon>Bacteria</taxon>
        <taxon>Pseudomonadati</taxon>
        <taxon>Chlorobiota</taxon>
        <taxon>Chlorobiia</taxon>
        <taxon>Chlorobiales</taxon>
        <taxon>Chlorobiaceae</taxon>
        <taxon>Chlorobium/Pelodictyon group</taxon>
        <taxon>Chlorobium</taxon>
    </lineage>
</organism>
<accession>B3ELC6</accession>
<dbReference type="EC" id="3.1.3.11" evidence="1"/>
<dbReference type="EMBL" id="CP001101">
    <property type="protein sequence ID" value="ACE04714.1"/>
    <property type="molecule type" value="Genomic_DNA"/>
</dbReference>
<dbReference type="SMR" id="B3ELC6"/>
<dbReference type="STRING" id="331678.Cphamn1_1796"/>
<dbReference type="KEGG" id="cpb:Cphamn1_1796"/>
<dbReference type="eggNOG" id="COG0158">
    <property type="taxonomic scope" value="Bacteria"/>
</dbReference>
<dbReference type="HOGENOM" id="CLU_039977_2_2_10"/>
<dbReference type="OrthoDB" id="9806756at2"/>
<dbReference type="UniPathway" id="UPA00116"/>
<dbReference type="GO" id="GO:0005829">
    <property type="term" value="C:cytosol"/>
    <property type="evidence" value="ECO:0007669"/>
    <property type="project" value="TreeGrafter"/>
</dbReference>
<dbReference type="GO" id="GO:0042132">
    <property type="term" value="F:fructose 1,6-bisphosphate 1-phosphatase activity"/>
    <property type="evidence" value="ECO:0007669"/>
    <property type="project" value="UniProtKB-UniRule"/>
</dbReference>
<dbReference type="GO" id="GO:0000287">
    <property type="term" value="F:magnesium ion binding"/>
    <property type="evidence" value="ECO:0007669"/>
    <property type="project" value="UniProtKB-UniRule"/>
</dbReference>
<dbReference type="GO" id="GO:0030388">
    <property type="term" value="P:fructose 1,6-bisphosphate metabolic process"/>
    <property type="evidence" value="ECO:0007669"/>
    <property type="project" value="TreeGrafter"/>
</dbReference>
<dbReference type="GO" id="GO:0006002">
    <property type="term" value="P:fructose 6-phosphate metabolic process"/>
    <property type="evidence" value="ECO:0007669"/>
    <property type="project" value="TreeGrafter"/>
</dbReference>
<dbReference type="GO" id="GO:0006000">
    <property type="term" value="P:fructose metabolic process"/>
    <property type="evidence" value="ECO:0007669"/>
    <property type="project" value="TreeGrafter"/>
</dbReference>
<dbReference type="GO" id="GO:0006094">
    <property type="term" value="P:gluconeogenesis"/>
    <property type="evidence" value="ECO:0007669"/>
    <property type="project" value="UniProtKB-UniRule"/>
</dbReference>
<dbReference type="GO" id="GO:0019253">
    <property type="term" value="P:reductive pentose-phosphate cycle"/>
    <property type="evidence" value="ECO:0007669"/>
    <property type="project" value="UniProtKB-UniPathway"/>
</dbReference>
<dbReference type="GO" id="GO:0005986">
    <property type="term" value="P:sucrose biosynthetic process"/>
    <property type="evidence" value="ECO:0007669"/>
    <property type="project" value="TreeGrafter"/>
</dbReference>
<dbReference type="CDD" id="cd00354">
    <property type="entry name" value="FBPase"/>
    <property type="match status" value="1"/>
</dbReference>
<dbReference type="FunFam" id="3.30.540.10:FF:000002">
    <property type="entry name" value="Fructose-1,6-bisphosphatase class 1"/>
    <property type="match status" value="1"/>
</dbReference>
<dbReference type="FunFam" id="3.40.190.80:FF:000001">
    <property type="entry name" value="Fructose-1,6-bisphosphatase class 1"/>
    <property type="match status" value="1"/>
</dbReference>
<dbReference type="Gene3D" id="3.40.190.80">
    <property type="match status" value="1"/>
</dbReference>
<dbReference type="Gene3D" id="3.30.540.10">
    <property type="entry name" value="Fructose-1,6-Bisphosphatase, subunit A, domain 1"/>
    <property type="match status" value="1"/>
</dbReference>
<dbReference type="HAMAP" id="MF_01855">
    <property type="entry name" value="FBPase_class1"/>
    <property type="match status" value="1"/>
</dbReference>
<dbReference type="InterPro" id="IPR044015">
    <property type="entry name" value="FBPase_C_dom"/>
</dbReference>
<dbReference type="InterPro" id="IPR000146">
    <property type="entry name" value="FBPase_class-1"/>
</dbReference>
<dbReference type="InterPro" id="IPR033391">
    <property type="entry name" value="FBPase_N"/>
</dbReference>
<dbReference type="InterPro" id="IPR028343">
    <property type="entry name" value="FBPtase"/>
</dbReference>
<dbReference type="NCBIfam" id="NF006778">
    <property type="entry name" value="PRK09293.1-1"/>
    <property type="match status" value="1"/>
</dbReference>
<dbReference type="PANTHER" id="PTHR11556">
    <property type="entry name" value="FRUCTOSE-1,6-BISPHOSPHATASE-RELATED"/>
    <property type="match status" value="1"/>
</dbReference>
<dbReference type="PANTHER" id="PTHR11556:SF35">
    <property type="entry name" value="SEDOHEPTULOSE-1,7-BISPHOSPHATASE, CHLOROPLASTIC"/>
    <property type="match status" value="1"/>
</dbReference>
<dbReference type="Pfam" id="PF00316">
    <property type="entry name" value="FBPase"/>
    <property type="match status" value="1"/>
</dbReference>
<dbReference type="Pfam" id="PF18913">
    <property type="entry name" value="FBPase_C"/>
    <property type="match status" value="1"/>
</dbReference>
<dbReference type="PIRSF" id="PIRSF500210">
    <property type="entry name" value="FBPtase"/>
    <property type="match status" value="1"/>
</dbReference>
<dbReference type="PIRSF" id="PIRSF000904">
    <property type="entry name" value="FBPtase_SBPase"/>
    <property type="match status" value="1"/>
</dbReference>
<dbReference type="PRINTS" id="PR00115">
    <property type="entry name" value="F16BPHPHTASE"/>
</dbReference>
<dbReference type="SUPFAM" id="SSF56655">
    <property type="entry name" value="Carbohydrate phosphatase"/>
    <property type="match status" value="1"/>
</dbReference>
<evidence type="ECO:0000255" key="1">
    <source>
        <dbReference type="HAMAP-Rule" id="MF_01855"/>
    </source>
</evidence>
<protein>
    <recommendedName>
        <fullName evidence="1">Fructose-1,6-bisphosphatase class 1</fullName>
        <shortName evidence="1">FBPase class 1</shortName>
        <ecNumber evidence="1">3.1.3.11</ecNumber>
    </recommendedName>
    <alternativeName>
        <fullName evidence="1">D-fructose-1,6-bisphosphate 1-phosphohydrolase class 1</fullName>
    </alternativeName>
</protein>
<gene>
    <name evidence="1" type="primary">fbp</name>
    <name type="ordered locus">Cphamn1_1796</name>
</gene>
<reference key="1">
    <citation type="submission" date="2008-06" db="EMBL/GenBank/DDBJ databases">
        <title>Complete sequence of Chlorobium phaeobacteroides BS1.</title>
        <authorList>
            <consortium name="US DOE Joint Genome Institute"/>
            <person name="Lucas S."/>
            <person name="Copeland A."/>
            <person name="Lapidus A."/>
            <person name="Glavina del Rio T."/>
            <person name="Dalin E."/>
            <person name="Tice H."/>
            <person name="Bruce D."/>
            <person name="Goodwin L."/>
            <person name="Pitluck S."/>
            <person name="Schmutz J."/>
            <person name="Larimer F."/>
            <person name="Land M."/>
            <person name="Hauser L."/>
            <person name="Kyrpides N."/>
            <person name="Ovchinnikova G."/>
            <person name="Li T."/>
            <person name="Liu Z."/>
            <person name="Zhao F."/>
            <person name="Overmann J."/>
            <person name="Bryant D.A."/>
            <person name="Richardson P."/>
        </authorList>
    </citation>
    <scope>NUCLEOTIDE SEQUENCE [LARGE SCALE GENOMIC DNA]</scope>
    <source>
        <strain>BS1</strain>
    </source>
</reference>
<keyword id="KW-0113">Calvin cycle</keyword>
<keyword id="KW-0119">Carbohydrate metabolism</keyword>
<keyword id="KW-0963">Cytoplasm</keyword>
<keyword id="KW-0378">Hydrolase</keyword>
<keyword id="KW-0460">Magnesium</keyword>
<keyword id="KW-0479">Metal-binding</keyword>
<comment type="catalytic activity">
    <reaction evidence="1">
        <text>beta-D-fructose 1,6-bisphosphate + H2O = beta-D-fructose 6-phosphate + phosphate</text>
        <dbReference type="Rhea" id="RHEA:11064"/>
        <dbReference type="ChEBI" id="CHEBI:15377"/>
        <dbReference type="ChEBI" id="CHEBI:32966"/>
        <dbReference type="ChEBI" id="CHEBI:43474"/>
        <dbReference type="ChEBI" id="CHEBI:57634"/>
        <dbReference type="EC" id="3.1.3.11"/>
    </reaction>
</comment>
<comment type="cofactor">
    <cofactor evidence="1">
        <name>Mg(2+)</name>
        <dbReference type="ChEBI" id="CHEBI:18420"/>
    </cofactor>
    <text evidence="1">Binds 2 magnesium ions per subunit.</text>
</comment>
<comment type="pathway">
    <text evidence="1">Carbohydrate biosynthesis; Calvin cycle.</text>
</comment>
<comment type="subunit">
    <text evidence="1">Homotetramer.</text>
</comment>
<comment type="subcellular location">
    <subcellularLocation>
        <location evidence="1">Cytoplasm</location>
    </subcellularLocation>
</comment>
<comment type="similarity">
    <text evidence="1">Belongs to the FBPase class 1 family.</text>
</comment>
<feature type="chain" id="PRO_0000364523" description="Fructose-1,6-bisphosphatase class 1">
    <location>
        <begin position="1"/>
        <end position="333"/>
    </location>
</feature>
<feature type="binding site" evidence="1">
    <location>
        <position position="92"/>
    </location>
    <ligand>
        <name>Mg(2+)</name>
        <dbReference type="ChEBI" id="CHEBI:18420"/>
        <label>1</label>
    </ligand>
</feature>
<feature type="binding site" evidence="1">
    <location>
        <position position="113"/>
    </location>
    <ligand>
        <name>Mg(2+)</name>
        <dbReference type="ChEBI" id="CHEBI:18420"/>
        <label>1</label>
    </ligand>
</feature>
<feature type="binding site" evidence="1">
    <location>
        <position position="113"/>
    </location>
    <ligand>
        <name>Mg(2+)</name>
        <dbReference type="ChEBI" id="CHEBI:18420"/>
        <label>2</label>
    </ligand>
</feature>
<feature type="binding site" evidence="1">
    <location>
        <position position="115"/>
    </location>
    <ligand>
        <name>Mg(2+)</name>
        <dbReference type="ChEBI" id="CHEBI:18420"/>
        <label>1</label>
    </ligand>
</feature>
<feature type="binding site" evidence="1">
    <location>
        <begin position="116"/>
        <end position="119"/>
    </location>
    <ligand>
        <name>substrate</name>
    </ligand>
</feature>
<feature type="binding site" evidence="1">
    <location>
        <position position="116"/>
    </location>
    <ligand>
        <name>Mg(2+)</name>
        <dbReference type="ChEBI" id="CHEBI:18420"/>
        <label>2</label>
    </ligand>
</feature>
<feature type="binding site" evidence="1">
    <location>
        <position position="209"/>
    </location>
    <ligand>
        <name>substrate</name>
    </ligand>
</feature>
<feature type="binding site" evidence="1">
    <location>
        <position position="242"/>
    </location>
    <ligand>
        <name>substrate</name>
    </ligand>
</feature>
<feature type="binding site" evidence="1">
    <location>
        <position position="272"/>
    </location>
    <ligand>
        <name>substrate</name>
    </ligand>
</feature>
<feature type="binding site" evidence="1">
    <location>
        <position position="278"/>
    </location>
    <ligand>
        <name>Mg(2+)</name>
        <dbReference type="ChEBI" id="CHEBI:18420"/>
        <label>2</label>
    </ligand>
</feature>
<name>F16PA_CHLPB</name>